<evidence type="ECO:0000250" key="1">
    <source>
        <dbReference type="UniProtKB" id="P38862"/>
    </source>
</evidence>
<evidence type="ECO:0000250" key="2">
    <source>
        <dbReference type="UniProtKB" id="W0TA05"/>
    </source>
</evidence>
<evidence type="ECO:0000269" key="3">
    <source>
    </source>
</evidence>
<evidence type="ECO:0000269" key="4">
    <source>
    </source>
</evidence>
<evidence type="ECO:0000303" key="5">
    <source>
    </source>
</evidence>
<evidence type="ECO:0000305" key="6"/>
<evidence type="ECO:0000312" key="7">
    <source>
        <dbReference type="EMBL" id="CCC12459.1"/>
    </source>
</evidence>
<evidence type="ECO:0000312" key="8">
    <source>
        <dbReference type="Proteomes" id="UP000001881"/>
    </source>
</evidence>
<accession>F7W4M2</accession>
<protein>
    <recommendedName>
        <fullName evidence="1">Ubiquitin-like modifier-activating enzyme ATG7</fullName>
    </recommendedName>
    <alternativeName>
        <fullName evidence="1">ATG12-activating enzyme E1 ATG7</fullName>
    </alternativeName>
    <alternativeName>
        <fullName evidence="5">Autophagy-related protein 7</fullName>
    </alternativeName>
</protein>
<reference key="1">
    <citation type="journal article" date="2010" name="PLoS Genet.">
        <title>De novo assembly of a 40 Mb eukaryotic genome from short sequence reads: Sordaria macrospora, a model organism for fungal morphogenesis.</title>
        <authorList>
            <person name="Nowrousian M."/>
            <person name="Stajich J.E."/>
            <person name="Chu M."/>
            <person name="Engh I."/>
            <person name="Espagne E."/>
            <person name="Halliday K."/>
            <person name="Kamerewerd J."/>
            <person name="Kempken F."/>
            <person name="Knab B."/>
            <person name="Kuo H.-C."/>
            <person name="Osiewacz H.D."/>
            <person name="Poeggeler S."/>
            <person name="Read N.D."/>
            <person name="Seiler S."/>
            <person name="Smith K.M."/>
            <person name="Zickler D."/>
            <person name="Kueck U."/>
            <person name="Freitag M."/>
        </authorList>
    </citation>
    <scope>NUCLEOTIDE SEQUENCE [LARGE SCALE GENOMIC DNA]</scope>
    <source>
        <strain evidence="8">ATCC MYA-333 / DSM 997 / K(L3346) / K-hell</strain>
        <tissue evidence="7">Mycelium</tissue>
    </source>
</reference>
<reference key="2">
    <citation type="journal article" date="2009" name="Fungal Genet. Biol.">
        <title>SmATG7 is required for viability in the homothallic ascomycete Sordaria macrospora.</title>
        <authorList>
            <person name="Nolting N."/>
            <person name="Bernhards Y."/>
            <person name="Poeggeler S."/>
        </authorList>
    </citation>
    <scope>FUNCTION</scope>
    <scope>INDUCTION</scope>
    <scope>DISRUPTION PHENOTYPE</scope>
</reference>
<reference key="3">
    <citation type="journal article" date="2016" name="PLoS ONE">
        <title>Autophagy-Associated Protein SmATG12 Is Required for Fruiting-Body Formation in the Filamentous Ascomycete Sordaria macrospora.</title>
        <authorList>
            <person name="Werner A."/>
            <person name="Herzog B."/>
            <person name="Frey S."/>
            <person name="Poeggeler S."/>
        </authorList>
    </citation>
    <scope>INTERACTION WITH ATG12</scope>
</reference>
<proteinExistence type="evidence at protein level"/>
<gene>
    <name evidence="5" type="primary">ATG7</name>
    <name type="ORF">SMAC_06539</name>
</gene>
<name>ATG7_SORMK</name>
<dbReference type="EMBL" id="CABT02000028">
    <property type="protein sequence ID" value="CCC12459.1"/>
    <property type="molecule type" value="Genomic_DNA"/>
</dbReference>
<dbReference type="RefSeq" id="XP_003345985.1">
    <property type="nucleotide sequence ID" value="XM_003345937.1"/>
</dbReference>
<dbReference type="SMR" id="F7W4M2"/>
<dbReference type="FunCoup" id="F7W4M2">
    <property type="interactions" value="710"/>
</dbReference>
<dbReference type="STRING" id="771870.F7W4M2"/>
<dbReference type="GeneID" id="10803355"/>
<dbReference type="KEGG" id="smp:10803355"/>
<dbReference type="VEuPathDB" id="FungiDB:SMAC_06539"/>
<dbReference type="eggNOG" id="KOG2337">
    <property type="taxonomic scope" value="Eukaryota"/>
</dbReference>
<dbReference type="HOGENOM" id="CLU_012998_2_1_1"/>
<dbReference type="InParanoid" id="F7W4M2"/>
<dbReference type="OMA" id="RQIWDAI"/>
<dbReference type="OrthoDB" id="338614at2759"/>
<dbReference type="Proteomes" id="UP000001881">
    <property type="component" value="Unassembled WGS sequence"/>
</dbReference>
<dbReference type="GO" id="GO:0000407">
    <property type="term" value="C:phagophore assembly site"/>
    <property type="evidence" value="ECO:0007669"/>
    <property type="project" value="UniProtKB-SubCell"/>
</dbReference>
<dbReference type="GO" id="GO:0019778">
    <property type="term" value="F:Atg12 activating enzyme activity"/>
    <property type="evidence" value="ECO:0007669"/>
    <property type="project" value="TreeGrafter"/>
</dbReference>
<dbReference type="GO" id="GO:0019779">
    <property type="term" value="F:Atg8 activating enzyme activity"/>
    <property type="evidence" value="ECO:0007669"/>
    <property type="project" value="TreeGrafter"/>
</dbReference>
<dbReference type="GO" id="GO:0000045">
    <property type="term" value="P:autophagosome assembly"/>
    <property type="evidence" value="ECO:0007669"/>
    <property type="project" value="TreeGrafter"/>
</dbReference>
<dbReference type="GO" id="GO:0000422">
    <property type="term" value="P:autophagy of mitochondrion"/>
    <property type="evidence" value="ECO:0007669"/>
    <property type="project" value="TreeGrafter"/>
</dbReference>
<dbReference type="GO" id="GO:0006995">
    <property type="term" value="P:cellular response to nitrogen starvation"/>
    <property type="evidence" value="ECO:0007669"/>
    <property type="project" value="TreeGrafter"/>
</dbReference>
<dbReference type="GO" id="GO:0034727">
    <property type="term" value="P:piecemeal microautophagy of the nucleus"/>
    <property type="evidence" value="ECO:0007669"/>
    <property type="project" value="TreeGrafter"/>
</dbReference>
<dbReference type="GO" id="GO:0032446">
    <property type="term" value="P:protein modification by small protein conjugation"/>
    <property type="evidence" value="ECO:0007669"/>
    <property type="project" value="TreeGrafter"/>
</dbReference>
<dbReference type="GO" id="GO:0015031">
    <property type="term" value="P:protein transport"/>
    <property type="evidence" value="ECO:0007669"/>
    <property type="project" value="UniProtKB-KW"/>
</dbReference>
<dbReference type="CDD" id="cd01486">
    <property type="entry name" value="Apg7"/>
    <property type="match status" value="1"/>
</dbReference>
<dbReference type="FunFam" id="3.40.140.100:FF:000003">
    <property type="entry name" value="Autophagy ubiquitin-activating enzyme ApgG"/>
    <property type="match status" value="1"/>
</dbReference>
<dbReference type="FunFam" id="3.40.50.720:FF:000243">
    <property type="entry name" value="Ubiquitin-like modifier-activating enzyme ATG7"/>
    <property type="match status" value="1"/>
</dbReference>
<dbReference type="FunFam" id="3.40.140.70:FF:000001">
    <property type="entry name" value="Ubiquitin-like modifier-activating enzyme atg7"/>
    <property type="match status" value="1"/>
</dbReference>
<dbReference type="Gene3D" id="3.40.50.720">
    <property type="entry name" value="NAD(P)-binding Rossmann-like Domain"/>
    <property type="match status" value="1"/>
</dbReference>
<dbReference type="Gene3D" id="3.40.140.100">
    <property type="entry name" value="Ubiquitin-like modifier-activating enzyme ATG7 C-terminal domain"/>
    <property type="match status" value="1"/>
</dbReference>
<dbReference type="Gene3D" id="3.40.140.70">
    <property type="entry name" value="Ubiquitin-like modifier-activating enzyme ATG7 N-terminal domain"/>
    <property type="match status" value="1"/>
</dbReference>
<dbReference type="InterPro" id="IPR006285">
    <property type="entry name" value="Atg7"/>
</dbReference>
<dbReference type="InterPro" id="IPR032197">
    <property type="entry name" value="Atg7_N"/>
</dbReference>
<dbReference type="InterPro" id="IPR042522">
    <property type="entry name" value="Atg7_N_1"/>
</dbReference>
<dbReference type="InterPro" id="IPR042523">
    <property type="entry name" value="Atg7_N_2"/>
</dbReference>
<dbReference type="InterPro" id="IPR045886">
    <property type="entry name" value="ThiF/MoeB/HesA"/>
</dbReference>
<dbReference type="InterPro" id="IPR000594">
    <property type="entry name" value="ThiF_NAD_FAD-bd"/>
</dbReference>
<dbReference type="InterPro" id="IPR035985">
    <property type="entry name" value="Ubiquitin-activating_enz"/>
</dbReference>
<dbReference type="NCBIfam" id="TIGR01381">
    <property type="entry name" value="E1_like_apg7"/>
    <property type="match status" value="1"/>
</dbReference>
<dbReference type="PANTHER" id="PTHR10953">
    <property type="entry name" value="UBIQUITIN-ACTIVATING ENZYME E1"/>
    <property type="match status" value="1"/>
</dbReference>
<dbReference type="PANTHER" id="PTHR10953:SF3">
    <property type="entry name" value="UBIQUITIN-LIKE MODIFIER-ACTIVATING ENZYME ATG7"/>
    <property type="match status" value="1"/>
</dbReference>
<dbReference type="Pfam" id="PF16420">
    <property type="entry name" value="ATG7_N"/>
    <property type="match status" value="1"/>
</dbReference>
<dbReference type="Pfam" id="PF00899">
    <property type="entry name" value="ThiF"/>
    <property type="match status" value="1"/>
</dbReference>
<dbReference type="SUPFAM" id="SSF69572">
    <property type="entry name" value="Activating enzymes of the ubiquitin-like proteins"/>
    <property type="match status" value="1"/>
</dbReference>
<sequence length="699" mass="78377">MDLKFATFSSEIELPFYSALFSSKLDHDKLDSSARPVLGLYEPRSQANPEASTRMQILGSALTSDQDESGPLGMTRAEGYIKNVNTIEEFKNTDKNAMIKKAGEQIWDAIQDGTIYSCPSLLASFRILSYADLKKYRFTYWFAFPALHSEPQWKRTEPIGRLNSDESTALVERIGTWRYMVDRREHGFFLAKKVRGEASGPRSSLDDPGVDIGYRWDIGSLRDFETGFFNDAAEEDRYVAFVDPSNYPEYPSWPLRNLLILVRQRYRLNKVQILCYRDTQPRRHEARSIILPLAMDQVGDVELKSMPKVTGWERNGNGDLRPRVANLAEYMDPTRLADQAVDLNLKLMKWRLAPNLDLDTIKNTKCLLLGAGTLGSYVSRNLLGWGVRKITFIDYGSVSFSNPVRQPLFKFEDCHNGGKPKAIQAAEALREIYPGVDVEGYALSVPMLDHPIHNEAKTKAEFDKLKELIDSHDAIFLLMDTRESRWLPTLMGKAANKIVMNAALGFDTYVVMRHGAKPLDDSEDTLGCYFCNDVVVAADSMKDQTLDQQCTVTRPGVAAIASALLVELLTSILQHPLKQHAPAPISAGTGSAVSYERDPHDHPLGLVPHQVRGFLSNFQNMIIRGKSYPQCSACSKPVLDAYREGGWDFVKTALASRDYVAELSGLAEVQRLAEKAAAEMQWSEDEEGMGEEEGEGELI</sequence>
<keyword id="KW-0072">Autophagy</keyword>
<keyword id="KW-0963">Cytoplasm</keyword>
<keyword id="KW-0653">Protein transport</keyword>
<keyword id="KW-1185">Reference proteome</keyword>
<keyword id="KW-0813">Transport</keyword>
<comment type="function">
    <text evidence="1 3">E1-like activating enzyme involved in the 2 ubiquitin-like systems required for cytoplasm to vacuole transport (Cvt) and autophagy (PubMed:19351563). Activates ATG12 for its conjugation with ATG5 and ATG8 for its conjugation with phosphatidylethanolamine (By similarity). Both systems are needed for the ATG8 association to Cvt vesicles and autophagosomes membranes (By similarity). Autophagy is essential for maintenance of amino acid levels and protein synthesis under nitrogen starvation. Required for selective autophagic degradation of the nucleus (nucleophagy) as well as for mitophagy which contributes to regulate mitochondrial quantity and quality by eliminating the mitochondria to a basal level to fulfill cellular energy requirements and preventing excess ROS production (By similarity). Required for normal mycelial growth and conidiogenesis (PubMed:19351563).</text>
</comment>
<comment type="subunit">
    <text evidence="1 4">Homodimer (By similarity). Interacts with ATG8 through a thioester bond between Cys-550 and the C-terminal Gly of ATG8 and with ATG12 through a thioester bond between Cys-550 and the C-terminal Gly of ATG12 (PubMed:27309377). Also interacts with ATG3 (By similarity).</text>
</comment>
<comment type="subcellular location">
    <subcellularLocation>
        <location evidence="1">Cytoplasm</location>
    </subcellularLocation>
    <subcellularLocation>
        <location evidence="1">Preautophagosomal structure</location>
    </subcellularLocation>
</comment>
<comment type="induction">
    <text evidence="3">Up-regulated under amino acid starvation conditions and at late stages during sexual development (PubMed:19351563).</text>
</comment>
<comment type="domain">
    <text evidence="1">The C-terminal residues 653 to 691 are required for homodimerization, as well as the interactions with ATG3, ATG8 and ATG12; and the C-terminal 17 residues are required for the ATG8 lipidation (By similarity).</text>
</comment>
<comment type="domain">
    <text evidence="1">The GxGxxG motif is important for the function, possibly through binding with ATP (By similarity).</text>
</comment>
<comment type="disruption phenotype">
    <text evidence="3">Leads to lethality (PubMed:19351563). Heterokaryotic delta-ATG7/ATG7 strains and RNAi mutants produce aberrant fruiting-bodies (PubMed:19351563).</text>
</comment>
<comment type="similarity">
    <text evidence="6">Belongs to the ATG7 family.</text>
</comment>
<feature type="chain" id="PRO_0000443884" description="Ubiquitin-like modifier-activating enzyme ATG7">
    <location>
        <begin position="1"/>
        <end position="699"/>
    </location>
</feature>
<feature type="region of interest" description="Homodimerization" evidence="1">
    <location>
        <begin position="653"/>
        <end position="691"/>
    </location>
</feature>
<feature type="short sequence motif" description="GXGXXG motif" evidence="1">
    <location>
        <begin position="370"/>
        <end position="375"/>
    </location>
</feature>
<feature type="active site" description="Glycyl thioester intermediate" evidence="2">
    <location>
        <position position="550"/>
    </location>
</feature>
<organism>
    <name type="scientific">Sordaria macrospora (strain ATCC MYA-333 / DSM 997 / K(L3346) / K-hell)</name>
    <dbReference type="NCBI Taxonomy" id="771870"/>
    <lineage>
        <taxon>Eukaryota</taxon>
        <taxon>Fungi</taxon>
        <taxon>Dikarya</taxon>
        <taxon>Ascomycota</taxon>
        <taxon>Pezizomycotina</taxon>
        <taxon>Sordariomycetes</taxon>
        <taxon>Sordariomycetidae</taxon>
        <taxon>Sordariales</taxon>
        <taxon>Sordariaceae</taxon>
        <taxon>Sordaria</taxon>
    </lineage>
</organism>